<comment type="function">
    <text evidence="1">Participates actively in the response to hyperosmotic and heat shock by preventing the aggregation of stress-denatured proteins, in association with DnaK and GrpE. It is the nucleotide exchange factor for DnaK and may function as a thermosensor. Unfolded proteins bind initially to DnaJ; upon interaction with the DnaJ-bound protein, DnaK hydrolyzes its bound ATP, resulting in the formation of a stable complex. GrpE releases ADP from DnaK; ATP binding to DnaK triggers the release of the substrate protein, thus completing the reaction cycle. Several rounds of ATP-dependent interactions between DnaJ, DnaK and GrpE are required for fully efficient folding.</text>
</comment>
<comment type="subunit">
    <text evidence="1">Homodimer.</text>
</comment>
<comment type="subcellular location">
    <subcellularLocation>
        <location evidence="1">Cytoplasm</location>
    </subcellularLocation>
</comment>
<comment type="similarity">
    <text evidence="1">Belongs to the GrpE family.</text>
</comment>
<proteinExistence type="inferred from homology"/>
<protein>
    <recommendedName>
        <fullName evidence="1">Protein GrpE</fullName>
    </recommendedName>
    <alternativeName>
        <fullName evidence="1">HSP-70 cofactor</fullName>
    </alternativeName>
</protein>
<reference key="1">
    <citation type="journal article" date="2007" name="PLoS ONE">
        <title>Paradoxical DNA repair and peroxide resistance gene conservation in Bacillus pumilus SAFR-032.</title>
        <authorList>
            <person name="Gioia J."/>
            <person name="Yerrapragada S."/>
            <person name="Qin X."/>
            <person name="Jiang H."/>
            <person name="Igboeli O.C."/>
            <person name="Muzny D."/>
            <person name="Dugan-Rocha S."/>
            <person name="Ding Y."/>
            <person name="Hawes A."/>
            <person name="Liu W."/>
            <person name="Perez L."/>
            <person name="Kovar C."/>
            <person name="Dinh H."/>
            <person name="Lee S."/>
            <person name="Nazareth L."/>
            <person name="Blyth P."/>
            <person name="Holder M."/>
            <person name="Buhay C."/>
            <person name="Tirumalai M.R."/>
            <person name="Liu Y."/>
            <person name="Dasgupta I."/>
            <person name="Bokhetache L."/>
            <person name="Fujita M."/>
            <person name="Karouia F."/>
            <person name="Eswara Moorthy P."/>
            <person name="Siefert J."/>
            <person name="Uzman A."/>
            <person name="Buzumbo P."/>
            <person name="Verma A."/>
            <person name="Zwiya H."/>
            <person name="McWilliams B.D."/>
            <person name="Olowu A."/>
            <person name="Clinkenbeard K.D."/>
            <person name="Newcombe D."/>
            <person name="Golebiewski L."/>
            <person name="Petrosino J.F."/>
            <person name="Nicholson W.L."/>
            <person name="Fox G.E."/>
            <person name="Venkateswaran K."/>
            <person name="Highlander S.K."/>
            <person name="Weinstock G.M."/>
        </authorList>
    </citation>
    <scope>NUCLEOTIDE SEQUENCE [LARGE SCALE GENOMIC DNA]</scope>
    <source>
        <strain>SAFR-032</strain>
    </source>
</reference>
<feature type="chain" id="PRO_1000065514" description="Protein GrpE">
    <location>
        <begin position="1"/>
        <end position="185"/>
    </location>
</feature>
<feature type="region of interest" description="Disordered" evidence="2">
    <location>
        <begin position="1"/>
        <end position="37"/>
    </location>
</feature>
<keyword id="KW-0143">Chaperone</keyword>
<keyword id="KW-0963">Cytoplasm</keyword>
<keyword id="KW-0346">Stress response</keyword>
<sequence length="185" mass="21407">MSEEKQTPEQEAEVEAQEEAVQADTEEVTQDEQSAFQEKIDELQQLLDEKENKILRVQADFENYKRRARTEVETVQKYRSQHVVSDLLPALDNFERALGIDPDNEQAKSLLEGMQMVYRQLVEALKNEGVEPIEAVGKEFDPNLHQAVMQVEDENFDSNIVVEELQKGYKLKDRVIRPSMVKVNQ</sequence>
<organism>
    <name type="scientific">Bacillus pumilus (strain SAFR-032)</name>
    <dbReference type="NCBI Taxonomy" id="315750"/>
    <lineage>
        <taxon>Bacteria</taxon>
        <taxon>Bacillati</taxon>
        <taxon>Bacillota</taxon>
        <taxon>Bacilli</taxon>
        <taxon>Bacillales</taxon>
        <taxon>Bacillaceae</taxon>
        <taxon>Bacillus</taxon>
    </lineage>
</organism>
<name>GRPE_BACP2</name>
<evidence type="ECO:0000255" key="1">
    <source>
        <dbReference type="HAMAP-Rule" id="MF_01151"/>
    </source>
</evidence>
<evidence type="ECO:0000256" key="2">
    <source>
        <dbReference type="SAM" id="MobiDB-lite"/>
    </source>
</evidence>
<accession>A8FFD3</accession>
<gene>
    <name evidence="1" type="primary">grpE</name>
    <name type="ordered locus">BPUM_2281</name>
</gene>
<dbReference type="EMBL" id="CP000813">
    <property type="protein sequence ID" value="ABV62950.1"/>
    <property type="molecule type" value="Genomic_DNA"/>
</dbReference>
<dbReference type="RefSeq" id="WP_012010630.1">
    <property type="nucleotide sequence ID" value="NZ_VEIS01000005.1"/>
</dbReference>
<dbReference type="SMR" id="A8FFD3"/>
<dbReference type="STRING" id="315750.BPUM_2281"/>
<dbReference type="GeneID" id="5621547"/>
<dbReference type="KEGG" id="bpu:BPUM_2281"/>
<dbReference type="eggNOG" id="COG0576">
    <property type="taxonomic scope" value="Bacteria"/>
</dbReference>
<dbReference type="HOGENOM" id="CLU_057217_5_2_9"/>
<dbReference type="OrthoDB" id="9812586at2"/>
<dbReference type="Proteomes" id="UP000001355">
    <property type="component" value="Chromosome"/>
</dbReference>
<dbReference type="GO" id="GO:0005737">
    <property type="term" value="C:cytoplasm"/>
    <property type="evidence" value="ECO:0007669"/>
    <property type="project" value="UniProtKB-SubCell"/>
</dbReference>
<dbReference type="GO" id="GO:0000774">
    <property type="term" value="F:adenyl-nucleotide exchange factor activity"/>
    <property type="evidence" value="ECO:0007669"/>
    <property type="project" value="InterPro"/>
</dbReference>
<dbReference type="GO" id="GO:0042803">
    <property type="term" value="F:protein homodimerization activity"/>
    <property type="evidence" value="ECO:0007669"/>
    <property type="project" value="InterPro"/>
</dbReference>
<dbReference type="GO" id="GO:0051087">
    <property type="term" value="F:protein-folding chaperone binding"/>
    <property type="evidence" value="ECO:0007669"/>
    <property type="project" value="InterPro"/>
</dbReference>
<dbReference type="GO" id="GO:0051082">
    <property type="term" value="F:unfolded protein binding"/>
    <property type="evidence" value="ECO:0007669"/>
    <property type="project" value="TreeGrafter"/>
</dbReference>
<dbReference type="GO" id="GO:0006457">
    <property type="term" value="P:protein folding"/>
    <property type="evidence" value="ECO:0007669"/>
    <property type="project" value="InterPro"/>
</dbReference>
<dbReference type="CDD" id="cd00446">
    <property type="entry name" value="GrpE"/>
    <property type="match status" value="1"/>
</dbReference>
<dbReference type="FunFam" id="2.30.22.10:FF:000001">
    <property type="entry name" value="Protein GrpE"/>
    <property type="match status" value="1"/>
</dbReference>
<dbReference type="FunFam" id="3.90.20.20:FF:000002">
    <property type="entry name" value="Protein GrpE"/>
    <property type="match status" value="1"/>
</dbReference>
<dbReference type="Gene3D" id="3.90.20.20">
    <property type="match status" value="1"/>
</dbReference>
<dbReference type="Gene3D" id="2.30.22.10">
    <property type="entry name" value="Head domain of nucleotide exchange factor GrpE"/>
    <property type="match status" value="1"/>
</dbReference>
<dbReference type="HAMAP" id="MF_01151">
    <property type="entry name" value="GrpE"/>
    <property type="match status" value="1"/>
</dbReference>
<dbReference type="InterPro" id="IPR000740">
    <property type="entry name" value="GrpE"/>
</dbReference>
<dbReference type="InterPro" id="IPR013805">
    <property type="entry name" value="GrpE_coiled_coil"/>
</dbReference>
<dbReference type="InterPro" id="IPR009012">
    <property type="entry name" value="GrpE_head"/>
</dbReference>
<dbReference type="NCBIfam" id="NF010738">
    <property type="entry name" value="PRK14140.1"/>
    <property type="match status" value="1"/>
</dbReference>
<dbReference type="PANTHER" id="PTHR21237">
    <property type="entry name" value="GRPE PROTEIN"/>
    <property type="match status" value="1"/>
</dbReference>
<dbReference type="PANTHER" id="PTHR21237:SF23">
    <property type="entry name" value="GRPE PROTEIN HOMOLOG, MITOCHONDRIAL"/>
    <property type="match status" value="1"/>
</dbReference>
<dbReference type="Pfam" id="PF01025">
    <property type="entry name" value="GrpE"/>
    <property type="match status" value="1"/>
</dbReference>
<dbReference type="PRINTS" id="PR00773">
    <property type="entry name" value="GRPEPROTEIN"/>
</dbReference>
<dbReference type="SUPFAM" id="SSF58014">
    <property type="entry name" value="Coiled-coil domain of nucleotide exchange factor GrpE"/>
    <property type="match status" value="1"/>
</dbReference>
<dbReference type="SUPFAM" id="SSF51064">
    <property type="entry name" value="Head domain of nucleotide exchange factor GrpE"/>
    <property type="match status" value="1"/>
</dbReference>
<dbReference type="PROSITE" id="PS01071">
    <property type="entry name" value="GRPE"/>
    <property type="match status" value="1"/>
</dbReference>